<gene>
    <name evidence="1" type="primary">aroQ</name>
    <name type="ordered locus">CJA_2739</name>
</gene>
<keyword id="KW-0028">Amino-acid biosynthesis</keyword>
<keyword id="KW-0057">Aromatic amino acid biosynthesis</keyword>
<keyword id="KW-0456">Lyase</keyword>
<keyword id="KW-1185">Reference proteome</keyword>
<protein>
    <recommendedName>
        <fullName evidence="1">3-dehydroquinate dehydratase</fullName>
        <shortName evidence="1">3-dehydroquinase</shortName>
        <ecNumber evidence="1">4.2.1.10</ecNumber>
    </recommendedName>
    <alternativeName>
        <fullName evidence="1">Type II DHQase</fullName>
    </alternativeName>
</protein>
<dbReference type="EC" id="4.2.1.10" evidence="1"/>
<dbReference type="EMBL" id="CP000934">
    <property type="protein sequence ID" value="ACE82911.1"/>
    <property type="molecule type" value="Genomic_DNA"/>
</dbReference>
<dbReference type="RefSeq" id="WP_012488333.1">
    <property type="nucleotide sequence ID" value="NC_010995.1"/>
</dbReference>
<dbReference type="SMR" id="B3PBH2"/>
<dbReference type="STRING" id="498211.CJA_2739"/>
<dbReference type="KEGG" id="cja:CJA_2739"/>
<dbReference type="eggNOG" id="COG0757">
    <property type="taxonomic scope" value="Bacteria"/>
</dbReference>
<dbReference type="HOGENOM" id="CLU_090968_1_0_6"/>
<dbReference type="OrthoDB" id="9790793at2"/>
<dbReference type="UniPathway" id="UPA00053">
    <property type="reaction ID" value="UER00086"/>
</dbReference>
<dbReference type="Proteomes" id="UP000001036">
    <property type="component" value="Chromosome"/>
</dbReference>
<dbReference type="GO" id="GO:0003855">
    <property type="term" value="F:3-dehydroquinate dehydratase activity"/>
    <property type="evidence" value="ECO:0007669"/>
    <property type="project" value="UniProtKB-UniRule"/>
</dbReference>
<dbReference type="GO" id="GO:0008652">
    <property type="term" value="P:amino acid biosynthetic process"/>
    <property type="evidence" value="ECO:0007669"/>
    <property type="project" value="UniProtKB-KW"/>
</dbReference>
<dbReference type="GO" id="GO:0009073">
    <property type="term" value="P:aromatic amino acid family biosynthetic process"/>
    <property type="evidence" value="ECO:0007669"/>
    <property type="project" value="UniProtKB-KW"/>
</dbReference>
<dbReference type="GO" id="GO:0009423">
    <property type="term" value="P:chorismate biosynthetic process"/>
    <property type="evidence" value="ECO:0007669"/>
    <property type="project" value="UniProtKB-UniRule"/>
</dbReference>
<dbReference type="GO" id="GO:0019631">
    <property type="term" value="P:quinate catabolic process"/>
    <property type="evidence" value="ECO:0007669"/>
    <property type="project" value="TreeGrafter"/>
</dbReference>
<dbReference type="CDD" id="cd00466">
    <property type="entry name" value="DHQase_II"/>
    <property type="match status" value="1"/>
</dbReference>
<dbReference type="Gene3D" id="3.40.50.9100">
    <property type="entry name" value="Dehydroquinase, class II"/>
    <property type="match status" value="1"/>
</dbReference>
<dbReference type="HAMAP" id="MF_00169">
    <property type="entry name" value="AroQ"/>
    <property type="match status" value="1"/>
</dbReference>
<dbReference type="InterPro" id="IPR001874">
    <property type="entry name" value="DHquinase_II"/>
</dbReference>
<dbReference type="InterPro" id="IPR018509">
    <property type="entry name" value="DHquinase_II_CS"/>
</dbReference>
<dbReference type="InterPro" id="IPR036441">
    <property type="entry name" value="DHquinase_II_sf"/>
</dbReference>
<dbReference type="NCBIfam" id="TIGR01088">
    <property type="entry name" value="aroQ"/>
    <property type="match status" value="1"/>
</dbReference>
<dbReference type="NCBIfam" id="NF003804">
    <property type="entry name" value="PRK05395.1-1"/>
    <property type="match status" value="1"/>
</dbReference>
<dbReference type="NCBIfam" id="NF003805">
    <property type="entry name" value="PRK05395.1-2"/>
    <property type="match status" value="1"/>
</dbReference>
<dbReference type="NCBIfam" id="NF003806">
    <property type="entry name" value="PRK05395.1-3"/>
    <property type="match status" value="1"/>
</dbReference>
<dbReference type="NCBIfam" id="NF003807">
    <property type="entry name" value="PRK05395.1-4"/>
    <property type="match status" value="1"/>
</dbReference>
<dbReference type="PANTHER" id="PTHR21272">
    <property type="entry name" value="CATABOLIC 3-DEHYDROQUINASE"/>
    <property type="match status" value="1"/>
</dbReference>
<dbReference type="PANTHER" id="PTHR21272:SF3">
    <property type="entry name" value="CATABOLIC 3-DEHYDROQUINASE"/>
    <property type="match status" value="1"/>
</dbReference>
<dbReference type="Pfam" id="PF01220">
    <property type="entry name" value="DHquinase_II"/>
    <property type="match status" value="1"/>
</dbReference>
<dbReference type="PIRSF" id="PIRSF001399">
    <property type="entry name" value="DHquinase_II"/>
    <property type="match status" value="1"/>
</dbReference>
<dbReference type="SUPFAM" id="SSF52304">
    <property type="entry name" value="Type II 3-dehydroquinate dehydratase"/>
    <property type="match status" value="1"/>
</dbReference>
<dbReference type="PROSITE" id="PS01029">
    <property type="entry name" value="DEHYDROQUINASE_II"/>
    <property type="match status" value="1"/>
</dbReference>
<reference key="1">
    <citation type="journal article" date="2008" name="J. Bacteriol.">
        <title>Insights into plant cell wall degradation from the genome sequence of the soil bacterium Cellvibrio japonicus.</title>
        <authorList>
            <person name="DeBoy R.T."/>
            <person name="Mongodin E.F."/>
            <person name="Fouts D.E."/>
            <person name="Tailford L.E."/>
            <person name="Khouri H."/>
            <person name="Emerson J.B."/>
            <person name="Mohamoud Y."/>
            <person name="Watkins K."/>
            <person name="Henrissat B."/>
            <person name="Gilbert H.J."/>
            <person name="Nelson K.E."/>
        </authorList>
    </citation>
    <scope>NUCLEOTIDE SEQUENCE [LARGE SCALE GENOMIC DNA]</scope>
    <source>
        <strain>Ueda107</strain>
    </source>
</reference>
<evidence type="ECO:0000255" key="1">
    <source>
        <dbReference type="HAMAP-Rule" id="MF_00169"/>
    </source>
</evidence>
<accession>B3PBH2</accession>
<comment type="function">
    <text evidence="1">Catalyzes a trans-dehydration via an enolate intermediate.</text>
</comment>
<comment type="catalytic activity">
    <reaction evidence="1">
        <text>3-dehydroquinate = 3-dehydroshikimate + H2O</text>
        <dbReference type="Rhea" id="RHEA:21096"/>
        <dbReference type="ChEBI" id="CHEBI:15377"/>
        <dbReference type="ChEBI" id="CHEBI:16630"/>
        <dbReference type="ChEBI" id="CHEBI:32364"/>
        <dbReference type="EC" id="4.2.1.10"/>
    </reaction>
</comment>
<comment type="pathway">
    <text evidence="1">Metabolic intermediate biosynthesis; chorismate biosynthesis; chorismate from D-erythrose 4-phosphate and phosphoenolpyruvate: step 3/7.</text>
</comment>
<comment type="subunit">
    <text evidence="1">Homododecamer.</text>
</comment>
<comment type="similarity">
    <text evidence="1">Belongs to the type-II 3-dehydroquinase family.</text>
</comment>
<proteinExistence type="inferred from homology"/>
<feature type="chain" id="PRO_1000097596" description="3-dehydroquinate dehydratase">
    <location>
        <begin position="1"/>
        <end position="148"/>
    </location>
</feature>
<feature type="active site" description="Proton acceptor" evidence="1">
    <location>
        <position position="23"/>
    </location>
</feature>
<feature type="active site" description="Proton donor" evidence="1">
    <location>
        <position position="101"/>
    </location>
</feature>
<feature type="binding site" evidence="1">
    <location>
        <position position="75"/>
    </location>
    <ligand>
        <name>substrate</name>
    </ligand>
</feature>
<feature type="binding site" evidence="1">
    <location>
        <position position="81"/>
    </location>
    <ligand>
        <name>substrate</name>
    </ligand>
</feature>
<feature type="binding site" evidence="1">
    <location>
        <position position="88"/>
    </location>
    <ligand>
        <name>substrate</name>
    </ligand>
</feature>
<feature type="binding site" evidence="1">
    <location>
        <begin position="102"/>
        <end position="103"/>
    </location>
    <ligand>
        <name>substrate</name>
    </ligand>
</feature>
<feature type="binding site" evidence="1">
    <location>
        <position position="112"/>
    </location>
    <ligand>
        <name>substrate</name>
    </ligand>
</feature>
<feature type="site" description="Transition state stabilizer" evidence="1">
    <location>
        <position position="18"/>
    </location>
</feature>
<organism>
    <name type="scientific">Cellvibrio japonicus (strain Ueda107)</name>
    <name type="common">Pseudomonas fluorescens subsp. cellulosa</name>
    <dbReference type="NCBI Taxonomy" id="498211"/>
    <lineage>
        <taxon>Bacteria</taxon>
        <taxon>Pseudomonadati</taxon>
        <taxon>Pseudomonadota</taxon>
        <taxon>Gammaproteobacteria</taxon>
        <taxon>Cellvibrionales</taxon>
        <taxon>Cellvibrionaceae</taxon>
        <taxon>Cellvibrio</taxon>
    </lineage>
</organism>
<name>AROQ_CELJU</name>
<sequence length="148" mass="16190">MATILVLHGPNLNLLGLREPGIYGATTLADINQTLSEMATKAGHHLQYLQSNAEYELIDRIHDARKEGVDFIIINPAAFTHTSVALRDALLGVDIPFIEVHLSNVHKREAFRHHSFFSDVAQGVICGFGATSYELALQAAFKILGTPV</sequence>